<gene>
    <name evidence="8" type="primary">CRK2</name>
    <name type="ORF">PB000293.00.0</name>
    <name evidence="10" type="ORF">PBANKA_1133200</name>
</gene>
<organism>
    <name type="scientific">Plasmodium berghei (strain Anka)</name>
    <dbReference type="NCBI Taxonomy" id="5823"/>
    <lineage>
        <taxon>Eukaryota</taxon>
        <taxon>Sar</taxon>
        <taxon>Alveolata</taxon>
        <taxon>Apicomplexa</taxon>
        <taxon>Aconoidasida</taxon>
        <taxon>Haemosporida</taxon>
        <taxon>Plasmodiidae</taxon>
        <taxon>Plasmodium</taxon>
        <taxon>Plasmodium (Vinckeia)</taxon>
    </lineage>
</organism>
<evidence type="ECO:0000250" key="1">
    <source>
        <dbReference type="UniProtKB" id="P04551"/>
    </source>
</evidence>
<evidence type="ECO:0000250" key="2">
    <source>
        <dbReference type="UniProtKB" id="P24941"/>
    </source>
</evidence>
<evidence type="ECO:0000250" key="3">
    <source>
        <dbReference type="UniProtKB" id="P61075"/>
    </source>
</evidence>
<evidence type="ECO:0000255" key="4">
    <source>
        <dbReference type="PROSITE-ProRule" id="PRU00159"/>
    </source>
</evidence>
<evidence type="ECO:0000255" key="5">
    <source>
        <dbReference type="PROSITE-ProRule" id="PRU10027"/>
    </source>
</evidence>
<evidence type="ECO:0000269" key="6">
    <source>
    </source>
</evidence>
<evidence type="ECO:0000269" key="7">
    <source>
    </source>
</evidence>
<evidence type="ECO:0000303" key="8">
    <source>
    </source>
</evidence>
<evidence type="ECO:0000305" key="9"/>
<evidence type="ECO:0000312" key="10">
    <source>
        <dbReference type="EMBL" id="VUC56753.1"/>
    </source>
</evidence>
<evidence type="ECO:0000312" key="11">
    <source>
        <dbReference type="Proteomes" id="UP000074855"/>
    </source>
</evidence>
<comment type="function">
    <text evidence="1 3">Serine/threonine-protein kinase (By similarity). Involved in the control of the cell cycle. Required for entry into S-phase and mitosis (By similarity). Probable component of the kinase complex that phosphorylates the repetitive C-terminus of RNA polymerase II (By similarity).</text>
</comment>
<comment type="catalytic activity">
    <reaction evidence="3">
        <text>L-seryl-[protein] + ATP = O-phospho-L-seryl-[protein] + ADP + H(+)</text>
        <dbReference type="Rhea" id="RHEA:17989"/>
        <dbReference type="Rhea" id="RHEA-COMP:9863"/>
        <dbReference type="Rhea" id="RHEA-COMP:11604"/>
        <dbReference type="ChEBI" id="CHEBI:15378"/>
        <dbReference type="ChEBI" id="CHEBI:29999"/>
        <dbReference type="ChEBI" id="CHEBI:30616"/>
        <dbReference type="ChEBI" id="CHEBI:83421"/>
        <dbReference type="ChEBI" id="CHEBI:456216"/>
        <dbReference type="EC" id="2.7.11.22"/>
    </reaction>
</comment>
<comment type="catalytic activity">
    <reaction evidence="3">
        <text>L-threonyl-[protein] + ATP = O-phospho-L-threonyl-[protein] + ADP + H(+)</text>
        <dbReference type="Rhea" id="RHEA:46608"/>
        <dbReference type="Rhea" id="RHEA-COMP:11060"/>
        <dbReference type="Rhea" id="RHEA-COMP:11605"/>
        <dbReference type="ChEBI" id="CHEBI:15378"/>
        <dbReference type="ChEBI" id="CHEBI:30013"/>
        <dbReference type="ChEBI" id="CHEBI:30616"/>
        <dbReference type="ChEBI" id="CHEBI:61977"/>
        <dbReference type="ChEBI" id="CHEBI:456216"/>
        <dbReference type="EC" id="2.7.11.22"/>
    </reaction>
</comment>
<comment type="catalytic activity">
    <reaction evidence="3">
        <text>[DNA-directed RNA polymerase] + ATP = phospho-[DNA-directed RNA polymerase] + ADP + H(+)</text>
        <dbReference type="Rhea" id="RHEA:10216"/>
        <dbReference type="Rhea" id="RHEA-COMP:11321"/>
        <dbReference type="Rhea" id="RHEA-COMP:11322"/>
        <dbReference type="ChEBI" id="CHEBI:15378"/>
        <dbReference type="ChEBI" id="CHEBI:30616"/>
        <dbReference type="ChEBI" id="CHEBI:43176"/>
        <dbReference type="ChEBI" id="CHEBI:68546"/>
        <dbReference type="ChEBI" id="CHEBI:456216"/>
        <dbReference type="EC" id="2.7.11.23"/>
    </reaction>
</comment>
<comment type="cofactor">
    <cofactor evidence="3">
        <name>Mg(2+)</name>
        <dbReference type="ChEBI" id="CHEBI:18420"/>
    </cofactor>
</comment>
<comment type="activity regulation">
    <text evidence="2">Phosphorylation at Thr-14 or Tyr-15 inactivates the enzyme, while phosphorylation at Thr-158 activates it.</text>
</comment>
<comment type="subunit">
    <text evidence="3">May form a complex composed of at least the catalytic subunit CRK2 and a cyclin.</text>
</comment>
<comment type="subcellular location">
    <subcellularLocation>
        <location evidence="1">Cytoplasm</location>
    </subcellularLocation>
</comment>
<comment type="developmental stage">
    <text evidence="7">Expressed at a low level during the asexual cell-cycle within the host erythrocytes. Also expressed in gametocytes and in stages during development in the mosquito.</text>
</comment>
<comment type="disruption phenotype">
    <text evidence="6">Normal asexual development in host erythrocytes, normal ookinete and oocyte development in the mosquito vector, normal number of oocyte and salivary gland sporozoites (PubMed:20951971). Normal transmission into the mouse host (PubMed:20951971).</text>
</comment>
<comment type="similarity">
    <text evidence="9">Belongs to the protein kinase superfamily. CMGC Ser/Thr protein kinase family. CDC2/CDKX subfamily.</text>
</comment>
<proteinExistence type="evidence at transcript level"/>
<sequence length="288" mass="32963">MEKYHGLEKIGEGTYGVVYKAQNSDGESFALKKIRLEKEDEGIPSTAIREISILKELRHSNIVKLYDVIHAKKRLILVFEHLDQDLKKLIDVCDGGLESVTAKSFLLQLLNGIAYCHEHRVLHRDLKPQNLLINREGELKIADFGLARAFGIPARRYTHEVVTLWYRAPDILMGSKKYSTPIDIWSVGCIFAEMVNGRPLFPGASETDQLMRIFKILGTPNSQNWPDVFKLPKYDPNFPVYNPLPWETFIKGLDDTGIDLLSKMLKLDPNQRITAKQAIEHPYFKETN</sequence>
<keyword id="KW-0067">ATP-binding</keyword>
<keyword id="KW-0131">Cell cycle</keyword>
<keyword id="KW-0132">Cell division</keyword>
<keyword id="KW-0963">Cytoplasm</keyword>
<keyword id="KW-0418">Kinase</keyword>
<keyword id="KW-0460">Magnesium</keyword>
<keyword id="KW-0479">Metal-binding</keyword>
<keyword id="KW-0498">Mitosis</keyword>
<keyword id="KW-0547">Nucleotide-binding</keyword>
<keyword id="KW-0597">Phosphoprotein</keyword>
<keyword id="KW-1185">Reference proteome</keyword>
<keyword id="KW-0723">Serine/threonine-protein kinase</keyword>
<keyword id="KW-0808">Transferase</keyword>
<feature type="chain" id="PRO_0000232668" description="Cyclin-dependent kinase 2 homolog">
    <location>
        <begin position="1"/>
        <end position="288"/>
    </location>
</feature>
<feature type="domain" description="Protein kinase" evidence="4">
    <location>
        <begin position="4"/>
        <end position="284"/>
    </location>
</feature>
<feature type="active site" description="Proton acceptor" evidence="4 5">
    <location>
        <position position="125"/>
    </location>
</feature>
<feature type="binding site" evidence="4">
    <location>
        <begin position="10"/>
        <end position="18"/>
    </location>
    <ligand>
        <name>ATP</name>
        <dbReference type="ChEBI" id="CHEBI:30616"/>
    </ligand>
</feature>
<feature type="binding site" evidence="4">
    <location>
        <position position="32"/>
    </location>
    <ligand>
        <name>ATP</name>
        <dbReference type="ChEBI" id="CHEBI:30616"/>
    </ligand>
</feature>
<feature type="modified residue" description="Phosphothreonine" evidence="2">
    <location>
        <position position="14"/>
    </location>
</feature>
<feature type="modified residue" description="Phosphotyrosine" evidence="2">
    <location>
        <position position="15"/>
    </location>
</feature>
<feature type="modified residue" description="Phosphothreonine" evidence="2">
    <location>
        <position position="158"/>
    </location>
</feature>
<feature type="sequence conflict" description="In Ref. 1; CAA11849." evidence="9" ref="1">
    <original>H</original>
    <variation>Q</variation>
    <location>
        <position position="81"/>
    </location>
</feature>
<feature type="sequence conflict" description="In Ref. 1; CAA11849." evidence="9" ref="1">
    <original>QA</original>
    <variation>YT</variation>
    <location>
        <begin position="277"/>
        <end position="278"/>
    </location>
</feature>
<accession>Q4Z6R1</accession>
<accession>A0A509AMJ6</accession>
<accession>O96820</accession>
<dbReference type="EC" id="2.7.11.22" evidence="3"/>
<dbReference type="EC" id="2.7.11.23" evidence="3"/>
<dbReference type="EMBL" id="AJ224152">
    <property type="protein sequence ID" value="CAA11849.1"/>
    <property type="molecule type" value="Genomic_DNA"/>
</dbReference>
<dbReference type="EMBL" id="LK023126">
    <property type="protein sequence ID" value="VUC56753.1"/>
    <property type="molecule type" value="Genomic_DNA"/>
</dbReference>
<dbReference type="RefSeq" id="XP_677202.1">
    <property type="nucleotide sequence ID" value="XM_672110.1"/>
</dbReference>
<dbReference type="SMR" id="Q4Z6R1"/>
<dbReference type="STRING" id="5823.A0A509AMJ6"/>
<dbReference type="VEuPathDB" id="PlasmoDB:PBANKA_1133200"/>
<dbReference type="eggNOG" id="KOG0594">
    <property type="taxonomic scope" value="Eukaryota"/>
</dbReference>
<dbReference type="HOGENOM" id="CLU_000288_181_1_1"/>
<dbReference type="InParanoid" id="A0A509AMJ6"/>
<dbReference type="OMA" id="YLYQITR"/>
<dbReference type="Proteomes" id="UP000074855">
    <property type="component" value="Chromosome 11"/>
</dbReference>
<dbReference type="GO" id="GO:0005737">
    <property type="term" value="C:cytoplasm"/>
    <property type="evidence" value="ECO:0007669"/>
    <property type="project" value="UniProtKB-SubCell"/>
</dbReference>
<dbReference type="GO" id="GO:0005634">
    <property type="term" value="C:nucleus"/>
    <property type="evidence" value="ECO:0007669"/>
    <property type="project" value="TreeGrafter"/>
</dbReference>
<dbReference type="GO" id="GO:0005524">
    <property type="term" value="F:ATP binding"/>
    <property type="evidence" value="ECO:0007669"/>
    <property type="project" value="UniProtKB-KW"/>
</dbReference>
<dbReference type="GO" id="GO:0004693">
    <property type="term" value="F:cyclin-dependent protein serine/threonine kinase activity"/>
    <property type="evidence" value="ECO:0007669"/>
    <property type="project" value="UniProtKB-EC"/>
</dbReference>
<dbReference type="GO" id="GO:0046872">
    <property type="term" value="F:metal ion binding"/>
    <property type="evidence" value="ECO:0007669"/>
    <property type="project" value="UniProtKB-KW"/>
</dbReference>
<dbReference type="GO" id="GO:0106310">
    <property type="term" value="F:protein serine kinase activity"/>
    <property type="evidence" value="ECO:0007669"/>
    <property type="project" value="RHEA"/>
</dbReference>
<dbReference type="GO" id="GO:0008353">
    <property type="term" value="F:RNA polymerase II CTD heptapeptide repeat kinase activity"/>
    <property type="evidence" value="ECO:0007669"/>
    <property type="project" value="UniProtKB-EC"/>
</dbReference>
<dbReference type="GO" id="GO:0051301">
    <property type="term" value="P:cell division"/>
    <property type="evidence" value="ECO:0007669"/>
    <property type="project" value="UniProtKB-KW"/>
</dbReference>
<dbReference type="CDD" id="cd07829">
    <property type="entry name" value="STKc_CDK_like"/>
    <property type="match status" value="1"/>
</dbReference>
<dbReference type="FunFam" id="3.30.200.20:FF:000396">
    <property type="entry name" value="Cdc2-related kinase 2, putative"/>
    <property type="match status" value="1"/>
</dbReference>
<dbReference type="FunFam" id="1.10.510.10:FF:000184">
    <property type="entry name" value="cyclin-dependent kinase 5 homolog"/>
    <property type="match status" value="1"/>
</dbReference>
<dbReference type="Gene3D" id="3.30.200.20">
    <property type="entry name" value="Phosphorylase Kinase, domain 1"/>
    <property type="match status" value="1"/>
</dbReference>
<dbReference type="Gene3D" id="1.10.510.10">
    <property type="entry name" value="Transferase(Phosphotransferase) domain 1"/>
    <property type="match status" value="1"/>
</dbReference>
<dbReference type="InterPro" id="IPR050108">
    <property type="entry name" value="CDK"/>
</dbReference>
<dbReference type="InterPro" id="IPR011009">
    <property type="entry name" value="Kinase-like_dom_sf"/>
</dbReference>
<dbReference type="InterPro" id="IPR000719">
    <property type="entry name" value="Prot_kinase_dom"/>
</dbReference>
<dbReference type="InterPro" id="IPR017441">
    <property type="entry name" value="Protein_kinase_ATP_BS"/>
</dbReference>
<dbReference type="InterPro" id="IPR008271">
    <property type="entry name" value="Ser/Thr_kinase_AS"/>
</dbReference>
<dbReference type="PANTHER" id="PTHR24056">
    <property type="entry name" value="CELL DIVISION PROTEIN KINASE"/>
    <property type="match status" value="1"/>
</dbReference>
<dbReference type="PANTHER" id="PTHR24056:SF46">
    <property type="entry name" value="CYCLIN-DEPENDENT KINASE 5"/>
    <property type="match status" value="1"/>
</dbReference>
<dbReference type="Pfam" id="PF00069">
    <property type="entry name" value="Pkinase"/>
    <property type="match status" value="1"/>
</dbReference>
<dbReference type="SMART" id="SM00220">
    <property type="entry name" value="S_TKc"/>
    <property type="match status" value="1"/>
</dbReference>
<dbReference type="SUPFAM" id="SSF56112">
    <property type="entry name" value="Protein kinase-like (PK-like)"/>
    <property type="match status" value="1"/>
</dbReference>
<dbReference type="PROSITE" id="PS00107">
    <property type="entry name" value="PROTEIN_KINASE_ATP"/>
    <property type="match status" value="1"/>
</dbReference>
<dbReference type="PROSITE" id="PS50011">
    <property type="entry name" value="PROTEIN_KINASE_DOM"/>
    <property type="match status" value="1"/>
</dbReference>
<dbReference type="PROSITE" id="PS00108">
    <property type="entry name" value="PROTEIN_KINASE_ST"/>
    <property type="match status" value="1"/>
</dbReference>
<name>CDK2H_PLABA</name>
<protein>
    <recommendedName>
        <fullName evidence="9">Cyclin-dependent kinase 2 homolog</fullName>
        <ecNumber evidence="3">2.7.11.22</ecNumber>
        <ecNumber evidence="3">2.7.11.23</ecNumber>
    </recommendedName>
    <alternativeName>
        <fullName evidence="3">Cell division control protein 2 homolog</fullName>
    </alternativeName>
    <alternativeName>
        <fullName evidence="8">cdc2-related kinase 2</fullName>
    </alternativeName>
</protein>
<reference key="1">
    <citation type="journal article" date="1998" name="Mol. Biochem. Parasitol.">
        <title>Characterisation of the Cdc2-related kinase 2 gene from Plasmodium knowlesi and P. berghei.</title>
        <authorList>
            <person name="Vinkenoog R."/>
            <person name="Speranca M.A."/>
            <person name="Ramesar J."/>
            <person name="Thomas A.W."/>
            <person name="del Portillo H.A."/>
            <person name="Janse C.J."/>
            <person name="Waters A.P."/>
        </authorList>
    </citation>
    <scope>NUCLEOTIDE SEQUENCE [GENOMIC DNA]</scope>
    <scope>DEVELOPMENTAL STAGE</scope>
</reference>
<reference evidence="11" key="2">
    <citation type="journal article" date="2014" name="BMC Biol.">
        <title>A comprehensive evaluation of rodent malaria parasite genomes and gene expression.</title>
        <authorList>
            <person name="Otto T.D."/>
            <person name="Bohme U."/>
            <person name="Jackson A.P."/>
            <person name="Hunt M."/>
            <person name="Franke-Fayard B."/>
            <person name="Hoeijmakers W.A."/>
            <person name="Religa A.A."/>
            <person name="Robertson L."/>
            <person name="Sanders M."/>
            <person name="Ogun S.A."/>
            <person name="Cunningham D."/>
            <person name="Erhart A."/>
            <person name="Billker O."/>
            <person name="Khan S.M."/>
            <person name="Stunnenberg H.G."/>
            <person name="Langhorne J."/>
            <person name="Holder A.A."/>
            <person name="Waters A.P."/>
            <person name="Newbold C.I."/>
            <person name="Pain A."/>
            <person name="Berriman M."/>
            <person name="Janse C.J."/>
        </authorList>
    </citation>
    <scope>NUCLEOTIDE SEQUENCE [LARGE SCALE GENOMIC DNA]</scope>
    <source>
        <strain evidence="11">ANKA</strain>
    </source>
</reference>
<reference key="3">
    <citation type="journal article" date="2010" name="Cell Host Microbe">
        <title>The systematic functional analysis of Plasmodium protein kinases identifies essential regulators of mosquito transmission.</title>
        <authorList>
            <person name="Tewari R."/>
            <person name="Straschil U."/>
            <person name="Bateman A."/>
            <person name="Boehme U."/>
            <person name="Cherevach I."/>
            <person name="Gong P."/>
            <person name="Pain A."/>
            <person name="Billker O."/>
        </authorList>
    </citation>
    <scope>DISRUPTION PHENOTYPE</scope>
</reference>